<sequence length="578" mass="62713">MSGIASACLSCLSTVDRWCHITACLGPIGGRSRDGIYETTLADNEREAVSDLLGYLENRAETDFFRGEPLSALSTLVYSDNVDLQRSASLTFAEITERDVREVDRDTLEPILFLLQSSDIEVQRAASAALGNLAVNADNKVLIVALGGLAPLIRQMMSPNVEVQCNAVGCITNLATHEDNKAKIARSGALGPLIRLAKSKDMRVQRNATGALLNMTHSDDNRQQLVNAGAIPVLVQLLSSSDVDVQYYCTTALSNIAVDASNRKRLAQTESRLVQSLVHLMDSSTPKVQCQAALALRNLASDEKYQLEIVRAKGLPPLLRLLQSSYLPLILSAVACIRNISIHPLNESPIIDAGFLKPLVDLLGSTDNEEIQCHAISTLRNLAASSDRNKELVLQAGAVQKCKDLVLKVPLSVQSEMTAAIAVLALSDELKPHLLNLGVFDVLIPLTESESIEVQGNSAAALGNLSSKVGDYSIFVRDWADPNGGIHGYLKRFLASGDPTFQHIAIWTLLQLLESEDKRLISYIAKSDDVVHMVKSISDKNIESDEEDQEDGEGEVIALARRCLEFLGNGPRQTLVEA</sequence>
<proteinExistence type="inferred from homology"/>
<accession>Q2U5T5</accession>
<comment type="function">
    <text evidence="1">Functions in both vacuole inheritance and protein targeting from the cytoplasm to vacuole.</text>
</comment>
<comment type="subcellular location">
    <subcellularLocation>
        <location evidence="1">Vacuole membrane</location>
        <topology evidence="1">Lipid-anchor</topology>
    </subcellularLocation>
</comment>
<comment type="similarity">
    <text evidence="2">Belongs to the beta-catenin family.</text>
</comment>
<keyword id="KW-0449">Lipoprotein</keyword>
<keyword id="KW-0472">Membrane</keyword>
<keyword id="KW-1185">Reference proteome</keyword>
<keyword id="KW-0677">Repeat</keyword>
<keyword id="KW-0926">Vacuole</keyword>
<protein>
    <recommendedName>
        <fullName>Vacuolar protein 8</fullName>
    </recommendedName>
</protein>
<gene>
    <name type="primary">vac8</name>
    <name type="ORF">AO090113000014</name>
</gene>
<evidence type="ECO:0000250" key="1"/>
<evidence type="ECO:0000305" key="2"/>
<feature type="chain" id="PRO_0000256207" description="Vacuolar protein 8">
    <location>
        <begin position="1"/>
        <end position="578"/>
    </location>
</feature>
<feature type="repeat" description="ARM 1">
    <location>
        <begin position="58"/>
        <end position="95"/>
    </location>
</feature>
<feature type="repeat" description="ARM 2">
    <location>
        <begin position="96"/>
        <end position="135"/>
    </location>
</feature>
<feature type="repeat" description="ARM 3">
    <location>
        <begin position="137"/>
        <end position="176"/>
    </location>
</feature>
<feature type="repeat" description="ARM 4">
    <location>
        <begin position="178"/>
        <end position="217"/>
    </location>
</feature>
<feature type="repeat" description="ARM 5">
    <location>
        <begin position="219"/>
        <end position="258"/>
    </location>
</feature>
<feature type="repeat" description="ARM 6">
    <location>
        <begin position="262"/>
        <end position="301"/>
    </location>
</feature>
<feature type="repeat" description="ARM 7">
    <location>
        <begin position="303"/>
        <end position="342"/>
    </location>
</feature>
<feature type="repeat" description="ARM 8">
    <location>
        <begin position="344"/>
        <end position="384"/>
    </location>
</feature>
<feature type="repeat" description="ARM 9">
    <location>
        <begin position="428"/>
        <end position="467"/>
    </location>
</feature>
<dbReference type="EMBL" id="BA000053">
    <property type="protein sequence ID" value="BAE63080.1"/>
    <property type="molecule type" value="Genomic_DNA"/>
</dbReference>
<dbReference type="RefSeq" id="XP_001824213.1">
    <property type="nucleotide sequence ID" value="XM_001824161.2"/>
</dbReference>
<dbReference type="SMR" id="Q2U5T5"/>
<dbReference type="STRING" id="510516.Q2U5T5"/>
<dbReference type="EnsemblFungi" id="BAE63080">
    <property type="protein sequence ID" value="BAE63080"/>
    <property type="gene ID" value="AO090113000014"/>
</dbReference>
<dbReference type="GeneID" id="5995860"/>
<dbReference type="KEGG" id="aor:AO090113000014"/>
<dbReference type="VEuPathDB" id="FungiDB:AO090113000014"/>
<dbReference type="HOGENOM" id="CLU_021483_0_0_1"/>
<dbReference type="OMA" id="VWDKPDG"/>
<dbReference type="OrthoDB" id="53500at5052"/>
<dbReference type="Proteomes" id="UP000006564">
    <property type="component" value="Chromosome 5"/>
</dbReference>
<dbReference type="GO" id="GO:0000329">
    <property type="term" value="C:fungal-type vacuole membrane"/>
    <property type="evidence" value="ECO:0007669"/>
    <property type="project" value="EnsemblFungi"/>
</dbReference>
<dbReference type="GO" id="GO:0045121">
    <property type="term" value="C:membrane raft"/>
    <property type="evidence" value="ECO:0007669"/>
    <property type="project" value="EnsemblFungi"/>
</dbReference>
<dbReference type="GO" id="GO:0071563">
    <property type="term" value="C:Myo2p-Vac17p-Vac8p transport complex"/>
    <property type="evidence" value="ECO:0007669"/>
    <property type="project" value="EnsemblFungi"/>
</dbReference>
<dbReference type="GO" id="GO:0031965">
    <property type="term" value="C:nuclear membrane"/>
    <property type="evidence" value="ECO:0007669"/>
    <property type="project" value="EnsemblFungi"/>
</dbReference>
<dbReference type="GO" id="GO:0071561">
    <property type="term" value="C:nucleus-vacuole junction"/>
    <property type="evidence" value="ECO:0007669"/>
    <property type="project" value="EnsemblFungi"/>
</dbReference>
<dbReference type="GO" id="GO:0000407">
    <property type="term" value="C:phagophore assembly site"/>
    <property type="evidence" value="ECO:0007669"/>
    <property type="project" value="EnsemblFungi"/>
</dbReference>
<dbReference type="GO" id="GO:0042802">
    <property type="term" value="F:identical protein binding"/>
    <property type="evidence" value="ECO:0007669"/>
    <property type="project" value="EnsemblFungi"/>
</dbReference>
<dbReference type="GO" id="GO:0043495">
    <property type="term" value="F:protein-membrane adaptor activity"/>
    <property type="evidence" value="ECO:0007669"/>
    <property type="project" value="EnsemblFungi"/>
</dbReference>
<dbReference type="GO" id="GO:0051656">
    <property type="term" value="P:establishment of organelle localization"/>
    <property type="evidence" value="ECO:0007669"/>
    <property type="project" value="EnsemblFungi"/>
</dbReference>
<dbReference type="GO" id="GO:0071562">
    <property type="term" value="P:nucleus-vacuole junction assembly"/>
    <property type="evidence" value="ECO:0007669"/>
    <property type="project" value="EnsemblFungi"/>
</dbReference>
<dbReference type="GO" id="GO:0000425">
    <property type="term" value="P:pexophagy"/>
    <property type="evidence" value="ECO:0007669"/>
    <property type="project" value="EnsemblFungi"/>
</dbReference>
<dbReference type="GO" id="GO:0034727">
    <property type="term" value="P:piecemeal microautophagy of the nucleus"/>
    <property type="evidence" value="ECO:0007669"/>
    <property type="project" value="EnsemblFungi"/>
</dbReference>
<dbReference type="GO" id="GO:1903044">
    <property type="term" value="P:protein localization to membrane raft"/>
    <property type="evidence" value="ECO:0007669"/>
    <property type="project" value="EnsemblFungi"/>
</dbReference>
<dbReference type="GO" id="GO:0034497">
    <property type="term" value="P:protein localization to phagophore assembly site"/>
    <property type="evidence" value="ECO:0007669"/>
    <property type="project" value="EnsemblFungi"/>
</dbReference>
<dbReference type="GO" id="GO:0031503">
    <property type="term" value="P:protein-containing complex localization"/>
    <property type="evidence" value="ECO:0007669"/>
    <property type="project" value="EnsemblFungi"/>
</dbReference>
<dbReference type="GO" id="GO:0034517">
    <property type="term" value="P:ribophagy"/>
    <property type="evidence" value="ECO:0007669"/>
    <property type="project" value="EnsemblFungi"/>
</dbReference>
<dbReference type="GO" id="GO:0042144">
    <property type="term" value="P:vacuole fusion, non-autophagic"/>
    <property type="evidence" value="ECO:0007669"/>
    <property type="project" value="EnsemblFungi"/>
</dbReference>
<dbReference type="GO" id="GO:0000011">
    <property type="term" value="P:vacuole inheritance"/>
    <property type="evidence" value="ECO:0007669"/>
    <property type="project" value="EnsemblFungi"/>
</dbReference>
<dbReference type="FunFam" id="1.25.10.10:FF:000243">
    <property type="entry name" value="Putative Vacuolar protein 8"/>
    <property type="match status" value="1"/>
</dbReference>
<dbReference type="FunFam" id="1.25.10.10:FF:000095">
    <property type="entry name" value="Vacuolar protein 8"/>
    <property type="match status" value="1"/>
</dbReference>
<dbReference type="Gene3D" id="1.25.10.10">
    <property type="entry name" value="Leucine-rich Repeat Variant"/>
    <property type="match status" value="3"/>
</dbReference>
<dbReference type="InterPro" id="IPR011989">
    <property type="entry name" value="ARM-like"/>
</dbReference>
<dbReference type="InterPro" id="IPR016024">
    <property type="entry name" value="ARM-type_fold"/>
</dbReference>
<dbReference type="InterPro" id="IPR000225">
    <property type="entry name" value="Armadillo"/>
</dbReference>
<dbReference type="InterPro" id="IPR045156">
    <property type="entry name" value="Vac8"/>
</dbReference>
<dbReference type="PANTHER" id="PTHR47249">
    <property type="entry name" value="VACUOLAR PROTEIN 8"/>
    <property type="match status" value="1"/>
</dbReference>
<dbReference type="PANTHER" id="PTHR47249:SF1">
    <property type="entry name" value="VACUOLAR PROTEIN 8"/>
    <property type="match status" value="1"/>
</dbReference>
<dbReference type="Pfam" id="PF00514">
    <property type="entry name" value="Arm"/>
    <property type="match status" value="8"/>
</dbReference>
<dbReference type="SMART" id="SM00185">
    <property type="entry name" value="ARM"/>
    <property type="match status" value="9"/>
</dbReference>
<dbReference type="SUPFAM" id="SSF48371">
    <property type="entry name" value="ARM repeat"/>
    <property type="match status" value="1"/>
</dbReference>
<dbReference type="PROSITE" id="PS50176">
    <property type="entry name" value="ARM_REPEAT"/>
    <property type="match status" value="7"/>
</dbReference>
<organism>
    <name type="scientific">Aspergillus oryzae (strain ATCC 42149 / RIB 40)</name>
    <name type="common">Yellow koji mold</name>
    <dbReference type="NCBI Taxonomy" id="510516"/>
    <lineage>
        <taxon>Eukaryota</taxon>
        <taxon>Fungi</taxon>
        <taxon>Dikarya</taxon>
        <taxon>Ascomycota</taxon>
        <taxon>Pezizomycotina</taxon>
        <taxon>Eurotiomycetes</taxon>
        <taxon>Eurotiomycetidae</taxon>
        <taxon>Eurotiales</taxon>
        <taxon>Aspergillaceae</taxon>
        <taxon>Aspergillus</taxon>
        <taxon>Aspergillus subgen. Circumdati</taxon>
    </lineage>
</organism>
<name>VAC8_ASPOR</name>
<reference key="1">
    <citation type="journal article" date="2005" name="Nature">
        <title>Genome sequencing and analysis of Aspergillus oryzae.</title>
        <authorList>
            <person name="Machida M."/>
            <person name="Asai K."/>
            <person name="Sano M."/>
            <person name="Tanaka T."/>
            <person name="Kumagai T."/>
            <person name="Terai G."/>
            <person name="Kusumoto K."/>
            <person name="Arima T."/>
            <person name="Akita O."/>
            <person name="Kashiwagi Y."/>
            <person name="Abe K."/>
            <person name="Gomi K."/>
            <person name="Horiuchi H."/>
            <person name="Kitamoto K."/>
            <person name="Kobayashi T."/>
            <person name="Takeuchi M."/>
            <person name="Denning D.W."/>
            <person name="Galagan J.E."/>
            <person name="Nierman W.C."/>
            <person name="Yu J."/>
            <person name="Archer D.B."/>
            <person name="Bennett J.W."/>
            <person name="Bhatnagar D."/>
            <person name="Cleveland T.E."/>
            <person name="Fedorova N.D."/>
            <person name="Gotoh O."/>
            <person name="Horikawa H."/>
            <person name="Hosoyama A."/>
            <person name="Ichinomiya M."/>
            <person name="Igarashi R."/>
            <person name="Iwashita K."/>
            <person name="Juvvadi P.R."/>
            <person name="Kato M."/>
            <person name="Kato Y."/>
            <person name="Kin T."/>
            <person name="Kokubun A."/>
            <person name="Maeda H."/>
            <person name="Maeyama N."/>
            <person name="Maruyama J."/>
            <person name="Nagasaki H."/>
            <person name="Nakajima T."/>
            <person name="Oda K."/>
            <person name="Okada K."/>
            <person name="Paulsen I."/>
            <person name="Sakamoto K."/>
            <person name="Sawano T."/>
            <person name="Takahashi M."/>
            <person name="Takase K."/>
            <person name="Terabayashi Y."/>
            <person name="Wortman J.R."/>
            <person name="Yamada O."/>
            <person name="Yamagata Y."/>
            <person name="Anazawa H."/>
            <person name="Hata Y."/>
            <person name="Koide Y."/>
            <person name="Komori T."/>
            <person name="Koyama Y."/>
            <person name="Minetoki T."/>
            <person name="Suharnan S."/>
            <person name="Tanaka A."/>
            <person name="Isono K."/>
            <person name="Kuhara S."/>
            <person name="Ogasawara N."/>
            <person name="Kikuchi H."/>
        </authorList>
    </citation>
    <scope>NUCLEOTIDE SEQUENCE [LARGE SCALE GENOMIC DNA]</scope>
    <source>
        <strain>ATCC 42149 / RIB 40</strain>
    </source>
</reference>